<accession>Q3SH96</accession>
<feature type="chain" id="PRO_1000000699" description="Thymidylate synthase">
    <location>
        <begin position="1"/>
        <end position="264"/>
    </location>
</feature>
<feature type="active site" description="Nucleophile" evidence="1">
    <location>
        <position position="146"/>
    </location>
</feature>
<feature type="binding site" description="in other chain" evidence="1">
    <location>
        <position position="21"/>
    </location>
    <ligand>
        <name>dUMP</name>
        <dbReference type="ChEBI" id="CHEBI:246422"/>
        <note>ligand shared between dimeric partners</note>
    </ligand>
</feature>
<feature type="binding site" evidence="1">
    <location>
        <position position="51"/>
    </location>
    <ligand>
        <name>(6R)-5,10-methylene-5,6,7,8-tetrahydrofolate</name>
        <dbReference type="ChEBI" id="CHEBI:15636"/>
    </ligand>
</feature>
<feature type="binding site" evidence="1">
    <location>
        <begin position="126"/>
        <end position="127"/>
    </location>
    <ligand>
        <name>dUMP</name>
        <dbReference type="ChEBI" id="CHEBI:246422"/>
        <note>ligand shared between dimeric partners</note>
    </ligand>
</feature>
<feature type="binding site" description="in other chain" evidence="1">
    <location>
        <begin position="166"/>
        <end position="169"/>
    </location>
    <ligand>
        <name>dUMP</name>
        <dbReference type="ChEBI" id="CHEBI:246422"/>
        <note>ligand shared between dimeric partners</note>
    </ligand>
</feature>
<feature type="binding site" evidence="1">
    <location>
        <position position="169"/>
    </location>
    <ligand>
        <name>(6R)-5,10-methylene-5,6,7,8-tetrahydrofolate</name>
        <dbReference type="ChEBI" id="CHEBI:15636"/>
    </ligand>
</feature>
<feature type="binding site" description="in other chain" evidence="1">
    <location>
        <position position="177"/>
    </location>
    <ligand>
        <name>dUMP</name>
        <dbReference type="ChEBI" id="CHEBI:246422"/>
        <note>ligand shared between dimeric partners</note>
    </ligand>
</feature>
<feature type="binding site" description="in other chain" evidence="1">
    <location>
        <begin position="207"/>
        <end position="209"/>
    </location>
    <ligand>
        <name>dUMP</name>
        <dbReference type="ChEBI" id="CHEBI:246422"/>
        <note>ligand shared between dimeric partners</note>
    </ligand>
</feature>
<feature type="binding site" evidence="1">
    <location>
        <position position="263"/>
    </location>
    <ligand>
        <name>(6R)-5,10-methylene-5,6,7,8-tetrahydrofolate</name>
        <dbReference type="ChEBI" id="CHEBI:15636"/>
    </ligand>
</feature>
<keyword id="KW-0963">Cytoplasm</keyword>
<keyword id="KW-0489">Methyltransferase</keyword>
<keyword id="KW-0545">Nucleotide biosynthesis</keyword>
<keyword id="KW-1185">Reference proteome</keyword>
<keyword id="KW-0808">Transferase</keyword>
<protein>
    <recommendedName>
        <fullName evidence="1">Thymidylate synthase</fullName>
        <shortName evidence="1">TS</shortName>
        <shortName evidence="1">TSase</shortName>
        <ecNumber evidence="1">2.1.1.45</ecNumber>
    </recommendedName>
</protein>
<sequence length="264" mass="29887">MKPYLDLMRHVLEHGTRKDDRTGTGTLSVFGWQTRYDLAAGFPLVTTKKCHLRSIVHELLWFLQGDTNIRYLKENGVSIWDEWADENGDLGPVYGHQWRSWPKADGGVIDQIAEAVKTLRTNPDSRRIIVSAWNVADLDRMALAPCHAFFQFYVAEGRLSCQLYQRSADIFLGVPFNIASYALLTLMMAQVTGLKPGDFVHTLGDAHLYVNHLEQAREQLSREPRPLPTMTLNPDVTDIFGFRFEDFTLGGYDPHPAIKAPVAV</sequence>
<evidence type="ECO:0000255" key="1">
    <source>
        <dbReference type="HAMAP-Rule" id="MF_00008"/>
    </source>
</evidence>
<dbReference type="EC" id="2.1.1.45" evidence="1"/>
<dbReference type="EMBL" id="CP000116">
    <property type="protein sequence ID" value="AAZ97993.1"/>
    <property type="molecule type" value="Genomic_DNA"/>
</dbReference>
<dbReference type="RefSeq" id="WP_011312552.1">
    <property type="nucleotide sequence ID" value="NC_007404.1"/>
</dbReference>
<dbReference type="SMR" id="Q3SH96"/>
<dbReference type="STRING" id="292415.Tbd_2040"/>
<dbReference type="KEGG" id="tbd:Tbd_2040"/>
<dbReference type="eggNOG" id="COG0207">
    <property type="taxonomic scope" value="Bacteria"/>
</dbReference>
<dbReference type="HOGENOM" id="CLU_021669_0_0_4"/>
<dbReference type="OrthoDB" id="9774633at2"/>
<dbReference type="UniPathway" id="UPA00575"/>
<dbReference type="Proteomes" id="UP000008291">
    <property type="component" value="Chromosome"/>
</dbReference>
<dbReference type="GO" id="GO:0005829">
    <property type="term" value="C:cytosol"/>
    <property type="evidence" value="ECO:0007669"/>
    <property type="project" value="TreeGrafter"/>
</dbReference>
<dbReference type="GO" id="GO:0004799">
    <property type="term" value="F:thymidylate synthase activity"/>
    <property type="evidence" value="ECO:0007669"/>
    <property type="project" value="UniProtKB-UniRule"/>
</dbReference>
<dbReference type="GO" id="GO:0006231">
    <property type="term" value="P:dTMP biosynthetic process"/>
    <property type="evidence" value="ECO:0007669"/>
    <property type="project" value="UniProtKB-UniRule"/>
</dbReference>
<dbReference type="GO" id="GO:0006235">
    <property type="term" value="P:dTTP biosynthetic process"/>
    <property type="evidence" value="ECO:0007669"/>
    <property type="project" value="UniProtKB-UniRule"/>
</dbReference>
<dbReference type="GO" id="GO:0032259">
    <property type="term" value="P:methylation"/>
    <property type="evidence" value="ECO:0007669"/>
    <property type="project" value="UniProtKB-KW"/>
</dbReference>
<dbReference type="CDD" id="cd00351">
    <property type="entry name" value="TS_Pyrimidine_HMase"/>
    <property type="match status" value="1"/>
</dbReference>
<dbReference type="FunFam" id="3.30.572.10:FF:000001">
    <property type="entry name" value="Thymidylate synthase"/>
    <property type="match status" value="1"/>
</dbReference>
<dbReference type="Gene3D" id="3.30.572.10">
    <property type="entry name" value="Thymidylate synthase/dCMP hydroxymethylase domain"/>
    <property type="match status" value="1"/>
</dbReference>
<dbReference type="HAMAP" id="MF_00008">
    <property type="entry name" value="Thymidy_synth_bact"/>
    <property type="match status" value="1"/>
</dbReference>
<dbReference type="InterPro" id="IPR045097">
    <property type="entry name" value="Thymidate_synth/dCMP_Mease"/>
</dbReference>
<dbReference type="InterPro" id="IPR023451">
    <property type="entry name" value="Thymidate_synth/dCMP_Mease_dom"/>
</dbReference>
<dbReference type="InterPro" id="IPR036926">
    <property type="entry name" value="Thymidate_synth/dCMP_Mease_sf"/>
</dbReference>
<dbReference type="InterPro" id="IPR000398">
    <property type="entry name" value="Thymidylate_synthase"/>
</dbReference>
<dbReference type="InterPro" id="IPR020940">
    <property type="entry name" value="Thymidylate_synthase_AS"/>
</dbReference>
<dbReference type="NCBIfam" id="NF002497">
    <property type="entry name" value="PRK01827.1-3"/>
    <property type="match status" value="1"/>
</dbReference>
<dbReference type="NCBIfam" id="NF002499">
    <property type="entry name" value="PRK01827.1-5"/>
    <property type="match status" value="1"/>
</dbReference>
<dbReference type="NCBIfam" id="TIGR03284">
    <property type="entry name" value="thym_sym"/>
    <property type="match status" value="2"/>
</dbReference>
<dbReference type="PANTHER" id="PTHR11548:SF9">
    <property type="entry name" value="THYMIDYLATE SYNTHASE"/>
    <property type="match status" value="1"/>
</dbReference>
<dbReference type="PANTHER" id="PTHR11548">
    <property type="entry name" value="THYMIDYLATE SYNTHASE 1"/>
    <property type="match status" value="1"/>
</dbReference>
<dbReference type="Pfam" id="PF00303">
    <property type="entry name" value="Thymidylat_synt"/>
    <property type="match status" value="1"/>
</dbReference>
<dbReference type="PRINTS" id="PR00108">
    <property type="entry name" value="THYMDSNTHASE"/>
</dbReference>
<dbReference type="SUPFAM" id="SSF55831">
    <property type="entry name" value="Thymidylate synthase/dCMP hydroxymethylase"/>
    <property type="match status" value="1"/>
</dbReference>
<dbReference type="PROSITE" id="PS00091">
    <property type="entry name" value="THYMIDYLATE_SYNTHASE"/>
    <property type="match status" value="1"/>
</dbReference>
<name>TYSY_THIDA</name>
<reference key="1">
    <citation type="journal article" date="2006" name="J. Bacteriol.">
        <title>The genome sequence of the obligately chemolithoautotrophic, facultatively anaerobic bacterium Thiobacillus denitrificans.</title>
        <authorList>
            <person name="Beller H.R."/>
            <person name="Chain P.S."/>
            <person name="Letain T.E."/>
            <person name="Chakicherla A."/>
            <person name="Larimer F.W."/>
            <person name="Richardson P.M."/>
            <person name="Coleman M.A."/>
            <person name="Wood A.P."/>
            <person name="Kelly D.P."/>
        </authorList>
    </citation>
    <scope>NUCLEOTIDE SEQUENCE [LARGE SCALE GENOMIC DNA]</scope>
    <source>
        <strain>ATCC 25259 / T1</strain>
    </source>
</reference>
<comment type="function">
    <text evidence="1">Catalyzes the reductive methylation of 2'-deoxyuridine-5'-monophosphate (dUMP) to 2'-deoxythymidine-5'-monophosphate (dTMP) while utilizing 5,10-methylenetetrahydrofolate (mTHF) as the methyl donor and reductant in the reaction, yielding dihydrofolate (DHF) as a by-product. This enzymatic reaction provides an intracellular de novo source of dTMP, an essential precursor for DNA biosynthesis.</text>
</comment>
<comment type="catalytic activity">
    <reaction evidence="1">
        <text>dUMP + (6R)-5,10-methylene-5,6,7,8-tetrahydrofolate = 7,8-dihydrofolate + dTMP</text>
        <dbReference type="Rhea" id="RHEA:12104"/>
        <dbReference type="ChEBI" id="CHEBI:15636"/>
        <dbReference type="ChEBI" id="CHEBI:57451"/>
        <dbReference type="ChEBI" id="CHEBI:63528"/>
        <dbReference type="ChEBI" id="CHEBI:246422"/>
        <dbReference type="EC" id="2.1.1.45"/>
    </reaction>
</comment>
<comment type="pathway">
    <text evidence="1">Pyrimidine metabolism; dTTP biosynthesis.</text>
</comment>
<comment type="subunit">
    <text evidence="1">Homodimer.</text>
</comment>
<comment type="subcellular location">
    <subcellularLocation>
        <location evidence="1">Cytoplasm</location>
    </subcellularLocation>
</comment>
<comment type="similarity">
    <text evidence="1">Belongs to the thymidylate synthase family. Bacterial-type ThyA subfamily.</text>
</comment>
<gene>
    <name evidence="1" type="primary">thyA</name>
    <name type="ordered locus">Tbd_2040</name>
</gene>
<organism>
    <name type="scientific">Thiobacillus denitrificans (strain ATCC 25259 / T1)</name>
    <dbReference type="NCBI Taxonomy" id="292415"/>
    <lineage>
        <taxon>Bacteria</taxon>
        <taxon>Pseudomonadati</taxon>
        <taxon>Pseudomonadota</taxon>
        <taxon>Betaproteobacteria</taxon>
        <taxon>Nitrosomonadales</taxon>
        <taxon>Thiobacillaceae</taxon>
        <taxon>Thiobacillus</taxon>
    </lineage>
</organism>
<proteinExistence type="inferred from homology"/>